<comment type="function">
    <text evidence="1">Involved in chromosome condensation, segregation and cell cycle progression. May participate in facilitating chromosome segregation by condensation DNA from both sides of a centrally located replisome during cell division. Not required for mini-F plasmid partitioning. Probably acts via its interaction with MukB and MukE. Overexpression results in anucleate cells. It has a calcium binding activity.</text>
</comment>
<comment type="subunit">
    <text evidence="1">Interacts, and probably forms a ternary complex, with MukE and MukB via its C-terminal region. The complex formation is stimulated by calcium or magnesium. It is required for an interaction between MukE and MukB.</text>
</comment>
<comment type="subcellular location">
    <subcellularLocation>
        <location evidence="1">Cytoplasm</location>
        <location evidence="1">Nucleoid</location>
    </subcellularLocation>
    <text evidence="1">Restricted to the nucleoid region.</text>
</comment>
<comment type="similarity">
    <text evidence="1">Belongs to the MukF family.</text>
</comment>
<reference key="1">
    <citation type="journal article" date="2011" name="J. Bacteriol.">
        <title>Comparative genomics of 28 Salmonella enterica isolates: evidence for CRISPR-mediated adaptive sublineage evolution.</title>
        <authorList>
            <person name="Fricke W.F."/>
            <person name="Mammel M.K."/>
            <person name="McDermott P.F."/>
            <person name="Tartera C."/>
            <person name="White D.G."/>
            <person name="Leclerc J.E."/>
            <person name="Ravel J."/>
            <person name="Cebula T.A."/>
        </authorList>
    </citation>
    <scope>NUCLEOTIDE SEQUENCE [LARGE SCALE GENOMIC DNA]</scope>
    <source>
        <strain>CVM19633</strain>
    </source>
</reference>
<gene>
    <name evidence="1" type="primary">mukF</name>
    <name type="ordered locus">SeSA_A1106</name>
</gene>
<organism>
    <name type="scientific">Salmonella schwarzengrund (strain CVM19633)</name>
    <dbReference type="NCBI Taxonomy" id="439843"/>
    <lineage>
        <taxon>Bacteria</taxon>
        <taxon>Pseudomonadati</taxon>
        <taxon>Pseudomonadota</taxon>
        <taxon>Gammaproteobacteria</taxon>
        <taxon>Enterobacterales</taxon>
        <taxon>Enterobacteriaceae</taxon>
        <taxon>Salmonella</taxon>
    </lineage>
</organism>
<sequence length="440" mass="50461">MSEFSQTVPELVAWARKNDFSISLPVDRLSFLLAVATLNGERLDGEMSEGELVDAFRHVSDAFEQTSETIGVRANNAINDMVRQRLLNRFTSEQAEGNAIYRLTPLGIGITDYYIRQREFSTLRLSMQLSIVAGELKRAADAAAEGGDEFHWHRNVYAPLKYSVAEIFDSIDLTQRIMDEQQQQVKDDIAQLLNKDWRAAISSCELLLSETSGTLRELQDTLEAAGDKLQANLLRIQDATMTHDDLHFVDRLVFDLQSKLDRIISWGQQSIDLWIGYDRHVHKFIRTAIDMDKNRVFAQRLRQSVQTYFDDPWALTYANADRLLDMRDEEMALRDDEVTGELPPDLEYEEFNEIREQLAAIIEEQLAIYKTRQTPLDLGLVVREYLAQYPRARHFDVARIVIDQAVRLGVAQADFTGLPAKWQPINDYGAKVQAHVIDKY</sequence>
<protein>
    <recommendedName>
        <fullName evidence="1">Chromosome partition protein MukF</fullName>
    </recommendedName>
</protein>
<evidence type="ECO:0000255" key="1">
    <source>
        <dbReference type="HAMAP-Rule" id="MF_01803"/>
    </source>
</evidence>
<dbReference type="EMBL" id="CP001127">
    <property type="protein sequence ID" value="ACF91127.1"/>
    <property type="molecule type" value="Genomic_DNA"/>
</dbReference>
<dbReference type="RefSeq" id="WP_001288828.1">
    <property type="nucleotide sequence ID" value="NC_011094.1"/>
</dbReference>
<dbReference type="SMR" id="B4TRV4"/>
<dbReference type="KEGG" id="sew:SeSA_A1106"/>
<dbReference type="HOGENOM" id="CLU_049853_0_0_6"/>
<dbReference type="Proteomes" id="UP000001865">
    <property type="component" value="Chromosome"/>
</dbReference>
<dbReference type="GO" id="GO:0005737">
    <property type="term" value="C:cytoplasm"/>
    <property type="evidence" value="ECO:0007669"/>
    <property type="project" value="UniProtKB-UniRule"/>
</dbReference>
<dbReference type="GO" id="GO:0009295">
    <property type="term" value="C:nucleoid"/>
    <property type="evidence" value="ECO:0007669"/>
    <property type="project" value="UniProtKB-SubCell"/>
</dbReference>
<dbReference type="GO" id="GO:0005509">
    <property type="term" value="F:calcium ion binding"/>
    <property type="evidence" value="ECO:0007669"/>
    <property type="project" value="UniProtKB-UniRule"/>
</dbReference>
<dbReference type="GO" id="GO:0051301">
    <property type="term" value="P:cell division"/>
    <property type="evidence" value="ECO:0007669"/>
    <property type="project" value="UniProtKB-KW"/>
</dbReference>
<dbReference type="GO" id="GO:0030261">
    <property type="term" value="P:chromosome condensation"/>
    <property type="evidence" value="ECO:0007669"/>
    <property type="project" value="UniProtKB-KW"/>
</dbReference>
<dbReference type="GO" id="GO:0007059">
    <property type="term" value="P:chromosome segregation"/>
    <property type="evidence" value="ECO:0007669"/>
    <property type="project" value="UniProtKB-UniRule"/>
</dbReference>
<dbReference type="GO" id="GO:0006260">
    <property type="term" value="P:DNA replication"/>
    <property type="evidence" value="ECO:0007669"/>
    <property type="project" value="UniProtKB-UniRule"/>
</dbReference>
<dbReference type="CDD" id="cd16337">
    <property type="entry name" value="MukF_C"/>
    <property type="match status" value="1"/>
</dbReference>
<dbReference type="CDD" id="cd16335">
    <property type="entry name" value="MukF_N"/>
    <property type="match status" value="1"/>
</dbReference>
<dbReference type="Gene3D" id="1.20.58.590">
    <property type="entry name" value="Chromosome partition protein MukF, middle domain"/>
    <property type="match status" value="1"/>
</dbReference>
<dbReference type="Gene3D" id="1.10.225.40">
    <property type="entry name" value="MukF, C-terminal domain"/>
    <property type="match status" value="1"/>
</dbReference>
<dbReference type="Gene3D" id="1.10.10.10">
    <property type="entry name" value="Winged helix-like DNA-binding domain superfamily/Winged helix DNA-binding domain"/>
    <property type="match status" value="1"/>
</dbReference>
<dbReference type="HAMAP" id="MF_01803">
    <property type="entry name" value="MukF"/>
    <property type="match status" value="1"/>
</dbReference>
<dbReference type="InterPro" id="IPR005582">
    <property type="entry name" value="Chromosome_partition_MukF"/>
</dbReference>
<dbReference type="InterPro" id="IPR033441">
    <property type="entry name" value="MukF_C"/>
</dbReference>
<dbReference type="InterPro" id="IPR038198">
    <property type="entry name" value="MukF_C_sf"/>
</dbReference>
<dbReference type="InterPro" id="IPR033440">
    <property type="entry name" value="MukF_M"/>
</dbReference>
<dbReference type="InterPro" id="IPR036141">
    <property type="entry name" value="MukF_M_sp"/>
</dbReference>
<dbReference type="InterPro" id="IPR033439">
    <property type="entry name" value="MukF_WHTH"/>
</dbReference>
<dbReference type="InterPro" id="IPR036388">
    <property type="entry name" value="WH-like_DNA-bd_sf"/>
</dbReference>
<dbReference type="InterPro" id="IPR036390">
    <property type="entry name" value="WH_DNA-bd_sf"/>
</dbReference>
<dbReference type="NCBIfam" id="NF003615">
    <property type="entry name" value="PRK05260.1"/>
    <property type="match status" value="1"/>
</dbReference>
<dbReference type="Pfam" id="PF03882">
    <property type="entry name" value="KicB"/>
    <property type="match status" value="1"/>
</dbReference>
<dbReference type="Pfam" id="PF17193">
    <property type="entry name" value="MukF_C"/>
    <property type="match status" value="1"/>
</dbReference>
<dbReference type="Pfam" id="PF17192">
    <property type="entry name" value="MukF_M"/>
    <property type="match status" value="1"/>
</dbReference>
<dbReference type="PIRSF" id="PIRSF018282">
    <property type="entry name" value="MukF"/>
    <property type="match status" value="1"/>
</dbReference>
<dbReference type="SUPFAM" id="SSF140570">
    <property type="entry name" value="MukF C-terminal domain-like"/>
    <property type="match status" value="1"/>
</dbReference>
<dbReference type="SUPFAM" id="SSF46785">
    <property type="entry name" value="Winged helix' DNA-binding domain"/>
    <property type="match status" value="1"/>
</dbReference>
<name>MUKF_SALSV</name>
<keyword id="KW-0106">Calcium</keyword>
<keyword id="KW-0131">Cell cycle</keyword>
<keyword id="KW-0132">Cell division</keyword>
<keyword id="KW-0159">Chromosome partition</keyword>
<keyword id="KW-0963">Cytoplasm</keyword>
<keyword id="KW-0226">DNA condensation</keyword>
<proteinExistence type="inferred from homology"/>
<feature type="chain" id="PRO_1000187520" description="Chromosome partition protein MukF">
    <location>
        <begin position="1"/>
        <end position="440"/>
    </location>
</feature>
<feature type="region of interest" description="Leucine-zipper">
    <location>
        <begin position="208"/>
        <end position="236"/>
    </location>
</feature>
<accession>B4TRV4</accession>